<keyword id="KW-0175">Coiled coil</keyword>
<keyword id="KW-0446">Lipid-binding</keyword>
<keyword id="KW-0683">Retinol-binding</keyword>
<keyword id="KW-0964">Secreted</keyword>
<keyword id="KW-0732">Signal</keyword>
<keyword id="KW-0845">Vitamin A</keyword>
<dbReference type="EMBL" id="AY050257">
    <property type="protein sequence ID" value="AAL33793.1"/>
    <property type="molecule type" value="mRNA"/>
</dbReference>
<dbReference type="SMR" id="Q8WT55"/>
<dbReference type="STRING" id="6280.Q8WT55"/>
<dbReference type="GO" id="GO:0005576">
    <property type="term" value="C:extracellular region"/>
    <property type="evidence" value="ECO:0000250"/>
    <property type="project" value="UniProtKB"/>
</dbReference>
<dbReference type="GO" id="GO:0005504">
    <property type="term" value="F:fatty acid binding"/>
    <property type="evidence" value="ECO:0000250"/>
    <property type="project" value="UniProtKB"/>
</dbReference>
<dbReference type="GO" id="GO:0016918">
    <property type="term" value="F:retinal binding"/>
    <property type="evidence" value="ECO:0007669"/>
    <property type="project" value="UniProtKB-KW"/>
</dbReference>
<dbReference type="GO" id="GO:0019841">
    <property type="term" value="F:retinol binding"/>
    <property type="evidence" value="ECO:0000250"/>
    <property type="project" value="UniProtKB"/>
</dbReference>
<dbReference type="FunFam" id="1.20.120.1100:FF:000001">
    <property type="entry name" value="Fatty-acid and retinol-binding protein 1"/>
    <property type="match status" value="1"/>
</dbReference>
<dbReference type="Gene3D" id="1.20.120.1100">
    <property type="match status" value="1"/>
</dbReference>
<dbReference type="InterPro" id="IPR008632">
    <property type="entry name" value="Gp-FAR-1"/>
</dbReference>
<dbReference type="PANTHER" id="PTHR31418">
    <property type="entry name" value="FATTY-ACID AND RETINOL-BINDING PROTEIN 1"/>
    <property type="match status" value="1"/>
</dbReference>
<dbReference type="PANTHER" id="PTHR31418:SF7">
    <property type="entry name" value="FATTY-ACID AND RETINOL-BINDING PROTEIN 1"/>
    <property type="match status" value="1"/>
</dbReference>
<dbReference type="Pfam" id="PF05823">
    <property type="entry name" value="Gp-FAR-1"/>
    <property type="match status" value="1"/>
</dbReference>
<sequence length="178" mass="20355">MYHRLILLALVGTTMANVIPFSMNNIPEEYKEFIPEEVRNFYKDLTVEDKEILRELASKHATFANEDAALEALKDKSDKLYKNAVELRNFVKAKIDSLKPDAKIFVDEIIAKARSLRSDDGHKLDTEKIKQAARDIIAKYQALSEETKEELKVTFPAIAKIIGNEKLKRNASTFLQKN</sequence>
<accession>Q8WT55</accession>
<comment type="function">
    <text evidence="1">Binds retinol and different fatty acids.</text>
</comment>
<comment type="subcellular location">
    <subcellularLocation>
        <location evidence="2">Secreted</location>
    </subcellularLocation>
</comment>
<comment type="PTM">
    <text evidence="4">Not glycosylated.</text>
</comment>
<comment type="similarity">
    <text evidence="2 5">Belongs to the fatty-acid and retinol-binding protein (FARBP) family.</text>
</comment>
<gene>
    <name evidence="6" type="primary">far-1</name>
</gene>
<name>FAR1_BRUPA</name>
<reference evidence="6" key="1">
    <citation type="journal article" date="2002" name="Mol. Biochem. Parasitol.">
        <title>The FAR proteins of filarial nematodes: secretion, glycosylation and lipid binding characteristics.</title>
        <authorList>
            <person name="Garofalo A."/>
            <person name="Klager S.L."/>
            <person name="Rowlinson M.C."/>
            <person name="Nirmalan N."/>
            <person name="Klion A.D."/>
            <person name="Allen J.E."/>
            <person name="Kennedy M.W."/>
            <person name="Bradley J.E."/>
        </authorList>
    </citation>
    <scope>NUCLEOTIDE SEQUENCE [MRNA]</scope>
    <scope>LACK OF GLYCOSYLATION</scope>
</reference>
<feature type="signal peptide" evidence="3">
    <location>
        <begin position="1"/>
        <end position="16"/>
    </location>
</feature>
<feature type="chain" id="PRO_0000008759" description="Fatty-acid and retinol-binding protein 1" evidence="3">
    <location>
        <begin position="17"/>
        <end position="178"/>
    </location>
</feature>
<feature type="coiled-coil region" evidence="3">
    <location>
        <begin position="67"/>
        <end position="89"/>
    </location>
</feature>
<feature type="coiled-coil region" evidence="3">
    <location>
        <begin position="130"/>
        <end position="153"/>
    </location>
</feature>
<organism>
    <name type="scientific">Brugia pahangi</name>
    <name type="common">Filarial nematode worm</name>
    <dbReference type="NCBI Taxonomy" id="6280"/>
    <lineage>
        <taxon>Eukaryota</taxon>
        <taxon>Metazoa</taxon>
        <taxon>Ecdysozoa</taxon>
        <taxon>Nematoda</taxon>
        <taxon>Chromadorea</taxon>
        <taxon>Rhabditida</taxon>
        <taxon>Spirurina</taxon>
        <taxon>Spiruromorpha</taxon>
        <taxon>Filarioidea</taxon>
        <taxon>Onchocercidae</taxon>
        <taxon>Brugia</taxon>
    </lineage>
</organism>
<proteinExistence type="evidence at protein level"/>
<protein>
    <recommendedName>
        <fullName>Fatty-acid and retinol-binding protein 1</fullName>
    </recommendedName>
    <alternativeName>
        <fullName>Bp-FAR-1</fullName>
    </alternativeName>
</protein>
<evidence type="ECO:0000250" key="1"/>
<evidence type="ECO:0000250" key="2">
    <source>
        <dbReference type="UniProtKB" id="Q25619"/>
    </source>
</evidence>
<evidence type="ECO:0000255" key="3"/>
<evidence type="ECO:0000269" key="4">
    <source>
    </source>
</evidence>
<evidence type="ECO:0000305" key="5"/>
<evidence type="ECO:0000312" key="6">
    <source>
        <dbReference type="EMBL" id="AAL33793.1"/>
    </source>
</evidence>